<accession>B8J1I9</accession>
<reference key="1">
    <citation type="submission" date="2009-01" db="EMBL/GenBank/DDBJ databases">
        <title>Complete sequence of Desulfovibrio desulfuricans subsp. desulfuricans str. ATCC 27774.</title>
        <authorList>
            <consortium name="US DOE Joint Genome Institute"/>
            <person name="Lucas S."/>
            <person name="Copeland A."/>
            <person name="Lapidus A."/>
            <person name="Glavina del Rio T."/>
            <person name="Tice H."/>
            <person name="Bruce D."/>
            <person name="Goodwin L."/>
            <person name="Pitluck S."/>
            <person name="Sims D."/>
            <person name="Lu M."/>
            <person name="Kiss H."/>
            <person name="Meineke L."/>
            <person name="Brettin T."/>
            <person name="Detter J.C."/>
            <person name="Han C."/>
            <person name="Larimer F."/>
            <person name="Land M."/>
            <person name="Hauser L."/>
            <person name="Kyrpides N."/>
            <person name="Ovchinnikova G."/>
            <person name="Hazen T.C."/>
        </authorList>
    </citation>
    <scope>NUCLEOTIDE SEQUENCE [LARGE SCALE GENOMIC DNA]</scope>
    <source>
        <strain>ATCC 27774 / DSM 6949 / MB</strain>
    </source>
</reference>
<protein>
    <recommendedName>
        <fullName evidence="1">Putative manganese efflux pump MntP</fullName>
    </recommendedName>
</protein>
<organism>
    <name type="scientific">Desulfovibrio desulfuricans (strain ATCC 27774 / DSM 6949 / MB)</name>
    <dbReference type="NCBI Taxonomy" id="525146"/>
    <lineage>
        <taxon>Bacteria</taxon>
        <taxon>Pseudomonadati</taxon>
        <taxon>Thermodesulfobacteriota</taxon>
        <taxon>Desulfovibrionia</taxon>
        <taxon>Desulfovibrionales</taxon>
        <taxon>Desulfovibrionaceae</taxon>
        <taxon>Desulfovibrio</taxon>
    </lineage>
</organism>
<sequence length="193" mass="20427">MTIFAVFLLAIALSMDAFAVAVVSGCALQKPKVCHYVRLSAAFGFFQFAMPVIGWWLGVSVREYMEAWDHWIAFVLLGWIGGKMALSGLRALRNRESCACPSVDPTAGRNLVVLGVATSIDALAVGLSLAILGTPIWADAAIIGIVCAVITACGVYLGKTLANLCALNGWAELAGGLTLLAIACNILREHQVF</sequence>
<evidence type="ECO:0000255" key="1">
    <source>
        <dbReference type="HAMAP-Rule" id="MF_01521"/>
    </source>
</evidence>
<proteinExistence type="inferred from homology"/>
<comment type="function">
    <text evidence="1">Probably functions as a manganese efflux pump.</text>
</comment>
<comment type="subcellular location">
    <subcellularLocation>
        <location evidence="1">Cell inner membrane</location>
        <topology evidence="1">Multi-pass membrane protein</topology>
    </subcellularLocation>
</comment>
<comment type="similarity">
    <text evidence="1">Belongs to the MntP (TC 9.B.29) family.</text>
</comment>
<feature type="chain" id="PRO_1000185107" description="Putative manganese efflux pump MntP">
    <location>
        <begin position="1"/>
        <end position="193"/>
    </location>
</feature>
<feature type="transmembrane region" description="Helical" evidence="1">
    <location>
        <begin position="3"/>
        <end position="23"/>
    </location>
</feature>
<feature type="transmembrane region" description="Helical" evidence="1">
    <location>
        <begin position="41"/>
        <end position="61"/>
    </location>
</feature>
<feature type="transmembrane region" description="Helical" evidence="1">
    <location>
        <begin position="69"/>
        <end position="89"/>
    </location>
</feature>
<feature type="transmembrane region" description="Helical" evidence="1">
    <location>
        <begin position="107"/>
        <end position="127"/>
    </location>
</feature>
<feature type="transmembrane region" description="Helical" evidence="1">
    <location>
        <begin position="130"/>
        <end position="150"/>
    </location>
</feature>
<feature type="transmembrane region" description="Helical" evidence="1">
    <location>
        <begin position="164"/>
        <end position="184"/>
    </location>
</feature>
<dbReference type="EMBL" id="CP001358">
    <property type="protein sequence ID" value="ACL49597.1"/>
    <property type="molecule type" value="Genomic_DNA"/>
</dbReference>
<dbReference type="STRING" id="525146.Ddes_1699"/>
<dbReference type="KEGG" id="dds:Ddes_1699"/>
<dbReference type="eggNOG" id="COG1971">
    <property type="taxonomic scope" value="Bacteria"/>
</dbReference>
<dbReference type="HOGENOM" id="CLU_096410_3_0_7"/>
<dbReference type="GO" id="GO:0005886">
    <property type="term" value="C:plasma membrane"/>
    <property type="evidence" value="ECO:0007669"/>
    <property type="project" value="UniProtKB-SubCell"/>
</dbReference>
<dbReference type="GO" id="GO:0005384">
    <property type="term" value="F:manganese ion transmembrane transporter activity"/>
    <property type="evidence" value="ECO:0007669"/>
    <property type="project" value="UniProtKB-UniRule"/>
</dbReference>
<dbReference type="HAMAP" id="MF_01521">
    <property type="entry name" value="MntP_pump"/>
    <property type="match status" value="1"/>
</dbReference>
<dbReference type="InterPro" id="IPR003810">
    <property type="entry name" value="Mntp/YtaF"/>
</dbReference>
<dbReference type="InterPro" id="IPR022929">
    <property type="entry name" value="Put_MntP"/>
</dbReference>
<dbReference type="PANTHER" id="PTHR35529">
    <property type="entry name" value="MANGANESE EFFLUX PUMP MNTP-RELATED"/>
    <property type="match status" value="1"/>
</dbReference>
<dbReference type="PANTHER" id="PTHR35529:SF1">
    <property type="entry name" value="MANGANESE EFFLUX PUMP MNTP-RELATED"/>
    <property type="match status" value="1"/>
</dbReference>
<dbReference type="Pfam" id="PF02659">
    <property type="entry name" value="Mntp"/>
    <property type="match status" value="1"/>
</dbReference>
<gene>
    <name evidence="1" type="primary">mntP</name>
    <name type="ordered locus">Ddes_1699</name>
</gene>
<keyword id="KW-0997">Cell inner membrane</keyword>
<keyword id="KW-1003">Cell membrane</keyword>
<keyword id="KW-0406">Ion transport</keyword>
<keyword id="KW-0464">Manganese</keyword>
<keyword id="KW-0472">Membrane</keyword>
<keyword id="KW-0812">Transmembrane</keyword>
<keyword id="KW-1133">Transmembrane helix</keyword>
<keyword id="KW-0813">Transport</keyword>
<name>MNTP_DESDA</name>